<protein>
    <recommendedName>
        <fullName evidence="1">Large ribosomal subunit protein bL25</fullName>
    </recommendedName>
    <alternativeName>
        <fullName evidence="2">50S ribosomal protein L25</fullName>
    </alternativeName>
</protein>
<sequence>MSYTIAAEIRTEIGKGSSRRLRHANKVPAVIYGAGKEPISIKFDHKDIINIQENADFYSSDLTITVDGKDVKVRVQAMQRHAFKGLIEHIDFKFA</sequence>
<feature type="chain" id="PRO_1000086646" description="Large ribosomal subunit protein bL25">
    <location>
        <begin position="1"/>
        <end position="95"/>
    </location>
</feature>
<reference key="1">
    <citation type="submission" date="2007-08" db="EMBL/GenBank/DDBJ databases">
        <title>Complete sequence of Shewanella sediminis HAW-EB3.</title>
        <authorList>
            <consortium name="US DOE Joint Genome Institute"/>
            <person name="Copeland A."/>
            <person name="Lucas S."/>
            <person name="Lapidus A."/>
            <person name="Barry K."/>
            <person name="Glavina del Rio T."/>
            <person name="Dalin E."/>
            <person name="Tice H."/>
            <person name="Pitluck S."/>
            <person name="Chertkov O."/>
            <person name="Brettin T."/>
            <person name="Bruce D."/>
            <person name="Detter J.C."/>
            <person name="Han C."/>
            <person name="Schmutz J."/>
            <person name="Larimer F."/>
            <person name="Land M."/>
            <person name="Hauser L."/>
            <person name="Kyrpides N."/>
            <person name="Kim E."/>
            <person name="Zhao J.-S."/>
            <person name="Richardson P."/>
        </authorList>
    </citation>
    <scope>NUCLEOTIDE SEQUENCE [LARGE SCALE GENOMIC DNA]</scope>
    <source>
        <strain>HAW-EB3</strain>
    </source>
</reference>
<comment type="function">
    <text evidence="1">This is one of the proteins that binds to the 5S RNA in the ribosome where it forms part of the central protuberance.</text>
</comment>
<comment type="subunit">
    <text evidence="1">Part of the 50S ribosomal subunit; part of the 5S rRNA/L5/L18/L25 subcomplex. Contacts the 5S rRNA. Binds to the 5S rRNA independently of L5 and L18.</text>
</comment>
<comment type="similarity">
    <text evidence="1">Belongs to the bacterial ribosomal protein bL25 family.</text>
</comment>
<gene>
    <name evidence="1" type="primary">rplY</name>
    <name type="ordered locus">Ssed_2449</name>
</gene>
<evidence type="ECO:0000255" key="1">
    <source>
        <dbReference type="HAMAP-Rule" id="MF_01336"/>
    </source>
</evidence>
<evidence type="ECO:0000305" key="2"/>
<organism>
    <name type="scientific">Shewanella sediminis (strain HAW-EB3)</name>
    <dbReference type="NCBI Taxonomy" id="425104"/>
    <lineage>
        <taxon>Bacteria</taxon>
        <taxon>Pseudomonadati</taxon>
        <taxon>Pseudomonadota</taxon>
        <taxon>Gammaproteobacteria</taxon>
        <taxon>Alteromonadales</taxon>
        <taxon>Shewanellaceae</taxon>
        <taxon>Shewanella</taxon>
    </lineage>
</organism>
<name>RL25_SHESH</name>
<proteinExistence type="inferred from homology"/>
<keyword id="KW-1185">Reference proteome</keyword>
<keyword id="KW-0687">Ribonucleoprotein</keyword>
<keyword id="KW-0689">Ribosomal protein</keyword>
<keyword id="KW-0694">RNA-binding</keyword>
<keyword id="KW-0699">rRNA-binding</keyword>
<accession>A8FW35</accession>
<dbReference type="EMBL" id="CP000821">
    <property type="protein sequence ID" value="ABV37058.1"/>
    <property type="molecule type" value="Genomic_DNA"/>
</dbReference>
<dbReference type="RefSeq" id="WP_012142793.1">
    <property type="nucleotide sequence ID" value="NC_009831.1"/>
</dbReference>
<dbReference type="SMR" id="A8FW35"/>
<dbReference type="STRING" id="425104.Ssed_2449"/>
<dbReference type="KEGG" id="sse:Ssed_2449"/>
<dbReference type="eggNOG" id="COG1825">
    <property type="taxonomic scope" value="Bacteria"/>
</dbReference>
<dbReference type="HOGENOM" id="CLU_137946_0_0_6"/>
<dbReference type="OrthoDB" id="9806411at2"/>
<dbReference type="Proteomes" id="UP000002015">
    <property type="component" value="Chromosome"/>
</dbReference>
<dbReference type="GO" id="GO:0022625">
    <property type="term" value="C:cytosolic large ribosomal subunit"/>
    <property type="evidence" value="ECO:0007669"/>
    <property type="project" value="TreeGrafter"/>
</dbReference>
<dbReference type="GO" id="GO:0008097">
    <property type="term" value="F:5S rRNA binding"/>
    <property type="evidence" value="ECO:0007669"/>
    <property type="project" value="InterPro"/>
</dbReference>
<dbReference type="GO" id="GO:0003735">
    <property type="term" value="F:structural constituent of ribosome"/>
    <property type="evidence" value="ECO:0007669"/>
    <property type="project" value="InterPro"/>
</dbReference>
<dbReference type="GO" id="GO:0006412">
    <property type="term" value="P:translation"/>
    <property type="evidence" value="ECO:0007669"/>
    <property type="project" value="UniProtKB-UniRule"/>
</dbReference>
<dbReference type="CDD" id="cd00495">
    <property type="entry name" value="Ribosomal_L25_TL5_CTC"/>
    <property type="match status" value="1"/>
</dbReference>
<dbReference type="FunFam" id="2.40.240.10:FF:000002">
    <property type="entry name" value="50S ribosomal protein L25"/>
    <property type="match status" value="1"/>
</dbReference>
<dbReference type="Gene3D" id="2.40.240.10">
    <property type="entry name" value="Ribosomal Protein L25, Chain P"/>
    <property type="match status" value="1"/>
</dbReference>
<dbReference type="HAMAP" id="MF_01336">
    <property type="entry name" value="Ribosomal_bL25"/>
    <property type="match status" value="1"/>
</dbReference>
<dbReference type="InterPro" id="IPR020056">
    <property type="entry name" value="Rbsml_bL25/Gln-tRNA_synth_N"/>
</dbReference>
<dbReference type="InterPro" id="IPR011035">
    <property type="entry name" value="Ribosomal_bL25/Gln-tRNA_synth"/>
</dbReference>
<dbReference type="InterPro" id="IPR020055">
    <property type="entry name" value="Ribosomal_bL25_short"/>
</dbReference>
<dbReference type="InterPro" id="IPR029751">
    <property type="entry name" value="Ribosomal_L25_dom"/>
</dbReference>
<dbReference type="InterPro" id="IPR020930">
    <property type="entry name" value="Ribosomal_uL5_bac-type"/>
</dbReference>
<dbReference type="NCBIfam" id="NF004612">
    <property type="entry name" value="PRK05943.1"/>
    <property type="match status" value="1"/>
</dbReference>
<dbReference type="PANTHER" id="PTHR33284">
    <property type="entry name" value="RIBOSOMAL PROTEIN L25/GLN-TRNA SYNTHETASE, ANTI-CODON-BINDING DOMAIN-CONTAINING PROTEIN"/>
    <property type="match status" value="1"/>
</dbReference>
<dbReference type="PANTHER" id="PTHR33284:SF1">
    <property type="entry name" value="RIBOSOMAL PROTEIN L25_GLN-TRNA SYNTHETASE, ANTI-CODON-BINDING DOMAIN-CONTAINING PROTEIN"/>
    <property type="match status" value="1"/>
</dbReference>
<dbReference type="Pfam" id="PF01386">
    <property type="entry name" value="Ribosomal_L25p"/>
    <property type="match status" value="1"/>
</dbReference>
<dbReference type="SUPFAM" id="SSF50715">
    <property type="entry name" value="Ribosomal protein L25-like"/>
    <property type="match status" value="1"/>
</dbReference>